<evidence type="ECO:0000250" key="1"/>
<evidence type="ECO:0000250" key="2">
    <source>
        <dbReference type="UniProtKB" id="P51553"/>
    </source>
</evidence>
<evidence type="ECO:0000305" key="3"/>
<comment type="function">
    <text evidence="2">Regulatory subunit which plays a role in the allosteric regulation of the enzyme catalyzing the decarboxylation of isocitrate (ICT) into alpha-ketoglutarate. The heterodimer composed of the alpha (IDH3A) and beta (IDH3B) subunits and the heterodimer composed of the alpha (IDH3A) and gamma (IDH3G) subunits, have considerable basal activity but the full activity of the heterotetramer (containing two subunits of IDH3A, one of IDH3B and one of IDH3G) requires the assembly and cooperative function of both heterodimers.</text>
</comment>
<comment type="cofactor">
    <cofactor evidence="2">
        <name>Mg(2+)</name>
        <dbReference type="ChEBI" id="CHEBI:18420"/>
    </cofactor>
    <cofactor evidence="2">
        <name>Mn(2+)</name>
        <dbReference type="ChEBI" id="CHEBI:29035"/>
    </cofactor>
    <text evidence="2">Divalent metal cations; Mn(2+) or Mg(2+). Activity higher in presence of Mn(2+) than of Mg(2+). Binds 1 Mg(2+) or Mn(2+) ion per subunit.</text>
</comment>
<comment type="activity regulation">
    <text evidence="2">The heterotetramer and the heterodimer composed of IDH3A and IDH3G subunits can be allosterically activated by citrate (CIT) or/and ADP, and the two activators can act independently or synergistically. The heterodimer composed of IDH3A and IDH3B subunits cannot be allosterically regulated and the allosteric regulation of the heterotetramer is through the IDH3G subunit and not the IDH3B subunit. The IDH3G subunit contains the allosteric site which consists of a CIT-binding site and an ADP-binding site, and the binding of CIT and ADP causes conformational changes at the allosteric site which are transmitted to the active site in the catalytic subunit (IDH3A) through a cascade of conformational changes at the heterodimer interface, leading to stabilization of the isocitrate-binding at the active site and thus activation of the enzyme. ATP can activate the heterotetramer and the heterodimer composed of IDH3A and IDH3G subunits at low concentrations but inhibits their activities at high concentrations, whereas ATP exhibits only inhibitory effect on the heterodimer composed of IDH3A and IDH3B subunits.</text>
</comment>
<comment type="subunit">
    <text evidence="2">Heterooligomer of subunits alpha (IDH3A), beta (IDH3B), and gamma (IDH3G) in the apparent ratio of 2:1:1. The heterodimer containing one IDH3A and one IDH3B subunit and the heterodimer containing one IDH3A and one IDH3G subunit assemble into a heterotetramer (which contains two subunits of IDH3A, one of IDH3B and one of IDH3G) and further into the heterooctamer.</text>
</comment>
<comment type="subcellular location">
    <subcellularLocation>
        <location>Mitochondrion</location>
    </subcellularLocation>
</comment>
<comment type="similarity">
    <text evidence="3">Belongs to the isocitrate and isopropylmalate dehydrogenases family.</text>
</comment>
<accession>P41564</accession>
<organism>
    <name type="scientific">Macaca fascicularis</name>
    <name type="common">Crab-eating macaque</name>
    <name type="synonym">Cynomolgus monkey</name>
    <dbReference type="NCBI Taxonomy" id="9541"/>
    <lineage>
        <taxon>Eukaryota</taxon>
        <taxon>Metazoa</taxon>
        <taxon>Chordata</taxon>
        <taxon>Craniata</taxon>
        <taxon>Vertebrata</taxon>
        <taxon>Euteleostomi</taxon>
        <taxon>Mammalia</taxon>
        <taxon>Eutheria</taxon>
        <taxon>Euarchontoglires</taxon>
        <taxon>Primates</taxon>
        <taxon>Haplorrhini</taxon>
        <taxon>Catarrhini</taxon>
        <taxon>Cercopithecidae</taxon>
        <taxon>Cercopithecinae</taxon>
        <taxon>Macaca</taxon>
    </lineage>
</organism>
<sequence length="355" mass="38881">ISSQQTIPPSAKYGGRHTVTMIPGDGIGPELMLHVKSVFRHACVPVDFEEVHVSSNADEEDIRNAIMAIRRNRVALKGNIETNHNLPPSHKSRNNILRTSLDLYANVIHCKSLPGVVTRHKDIDILIVRENTEGEYSSLEHESVAGVVESLKIITKAKSLRIAEYAFKLAQESGRKKVTAVHKANIMKLGDGLFLQCCREVAARYPQITFENMIVDNTTMQLVSRPQQFDVMVMPNLYGNIVNNVCAGLVGGPGLVAGANYGHVYAVFETATRNTGKSIANKNIANPTATLLASCMMLDHLKLHSYATSIRKAVLASMDNENMHTPDIGGQGTTSEAIQDIIRHIRVINGRAVEA</sequence>
<feature type="transit peptide" description="Mitochondrion" evidence="1">
    <location>
        <begin position="1" status="less than"/>
        <end position="1"/>
    </location>
</feature>
<feature type="chain" id="PRO_0000014450" description="Isocitrate dehydrogenase [NAD] subunit gamma, mitochondrial">
    <location>
        <begin position="2"/>
        <end position="355"/>
    </location>
</feature>
<feature type="binding site" evidence="2">
    <location>
        <position position="82"/>
    </location>
    <ligand>
        <name>citrate</name>
        <dbReference type="ChEBI" id="CHEBI:16947"/>
        <note>allosteric activator</note>
    </ligand>
</feature>
<feature type="binding site" evidence="2">
    <location>
        <position position="95"/>
    </location>
    <ligand>
        <name>citrate</name>
        <dbReference type="ChEBI" id="CHEBI:16947"/>
        <note>allosteric activator</note>
    </ligand>
</feature>
<feature type="binding site" evidence="2">
    <location>
        <position position="98"/>
    </location>
    <ligand>
        <name>substrate</name>
    </ligand>
</feature>
<feature type="binding site" evidence="2">
    <location>
        <position position="129"/>
    </location>
    <ligand>
        <name>substrate</name>
    </ligand>
</feature>
<feature type="binding site" evidence="2">
    <location>
        <position position="216"/>
    </location>
    <ligand>
        <name>Mn(2+)</name>
        <dbReference type="ChEBI" id="CHEBI:29035"/>
        <note>ligand shared with catalytic subunit</note>
    </ligand>
</feature>
<feature type="binding site" evidence="2">
    <location>
        <position position="216"/>
    </location>
    <ligand>
        <name>substrate</name>
    </ligand>
</feature>
<feature type="binding site" evidence="2">
    <location>
        <position position="274"/>
    </location>
    <ligand>
        <name>ADP</name>
        <dbReference type="ChEBI" id="CHEBI:456216"/>
        <note>allosteric activator</note>
    </ligand>
</feature>
<feature type="binding site" evidence="2">
    <location>
        <position position="275"/>
    </location>
    <ligand>
        <name>ADP</name>
        <dbReference type="ChEBI" id="CHEBI:456216"/>
        <note>allosteric activator</note>
    </ligand>
</feature>
<feature type="binding site" evidence="2">
    <location>
        <position position="286"/>
    </location>
    <ligand>
        <name>ADP</name>
        <dbReference type="ChEBI" id="CHEBI:456216"/>
        <note>allosteric activator</note>
    </ligand>
</feature>
<feature type="non-terminal residue">
    <location>
        <position position="1"/>
    </location>
</feature>
<protein>
    <recommendedName>
        <fullName>Isocitrate dehydrogenase [NAD] subunit gamma, mitochondrial</fullName>
    </recommendedName>
    <alternativeName>
        <fullName>Isocitric dehydrogenase subunit gamma</fullName>
    </alternativeName>
    <alternativeName>
        <fullName>NAD(+)-specific ICDH subunit gamma</fullName>
    </alternativeName>
</protein>
<proteinExistence type="evidence at transcript level"/>
<keyword id="KW-0067">ATP-binding</keyword>
<keyword id="KW-0460">Magnesium</keyword>
<keyword id="KW-0464">Manganese</keyword>
<keyword id="KW-0479">Metal-binding</keyword>
<keyword id="KW-0496">Mitochondrion</keyword>
<keyword id="KW-0547">Nucleotide-binding</keyword>
<keyword id="KW-1185">Reference proteome</keyword>
<keyword id="KW-0809">Transit peptide</keyword>
<keyword id="KW-0816">Tricarboxylic acid cycle</keyword>
<gene>
    <name type="primary">IDH3G</name>
</gene>
<name>IDH3G_MACFA</name>
<reference key="1">
    <citation type="journal article" date="1993" name="Biochem. J.">
        <title>Molecular cloning and deduced amino acid sequences of the gamma-subunits of rat and monkey NAD(+)-isocitrate dehydrogenases.</title>
        <authorList>
            <person name="Nichols B.J."/>
            <person name="Hall L."/>
            <person name="Perry A.C.F."/>
            <person name="Denton R.M."/>
        </authorList>
    </citation>
    <scope>NUCLEOTIDE SEQUENCE [MRNA]</scope>
    <source>
        <tissue>Testis</tissue>
    </source>
</reference>
<dbReference type="EMBL" id="X74124">
    <property type="protein sequence ID" value="CAA52224.1"/>
    <property type="molecule type" value="mRNA"/>
</dbReference>
<dbReference type="PIR" id="S39065">
    <property type="entry name" value="S39065"/>
</dbReference>
<dbReference type="SMR" id="P41564"/>
<dbReference type="STRING" id="9541.ENSMFAP00000039635"/>
<dbReference type="eggNOG" id="KOG0784">
    <property type="taxonomic scope" value="Eukaryota"/>
</dbReference>
<dbReference type="Proteomes" id="UP000233100">
    <property type="component" value="Unplaced"/>
</dbReference>
<dbReference type="GO" id="GO:0005739">
    <property type="term" value="C:mitochondrion"/>
    <property type="evidence" value="ECO:0000250"/>
    <property type="project" value="UniProtKB"/>
</dbReference>
<dbReference type="GO" id="GO:0005524">
    <property type="term" value="F:ATP binding"/>
    <property type="evidence" value="ECO:0007669"/>
    <property type="project" value="UniProtKB-KW"/>
</dbReference>
<dbReference type="GO" id="GO:0004449">
    <property type="term" value="F:isocitrate dehydrogenase (NAD+) activity"/>
    <property type="evidence" value="ECO:0000250"/>
    <property type="project" value="UniProtKB"/>
</dbReference>
<dbReference type="GO" id="GO:0000287">
    <property type="term" value="F:magnesium ion binding"/>
    <property type="evidence" value="ECO:0000250"/>
    <property type="project" value="UniProtKB"/>
</dbReference>
<dbReference type="GO" id="GO:0051287">
    <property type="term" value="F:NAD binding"/>
    <property type="evidence" value="ECO:0007669"/>
    <property type="project" value="InterPro"/>
</dbReference>
<dbReference type="GO" id="GO:0006102">
    <property type="term" value="P:isocitrate metabolic process"/>
    <property type="evidence" value="ECO:0000250"/>
    <property type="project" value="UniProtKB"/>
</dbReference>
<dbReference type="GO" id="GO:0006099">
    <property type="term" value="P:tricarboxylic acid cycle"/>
    <property type="evidence" value="ECO:0007669"/>
    <property type="project" value="UniProtKB-KW"/>
</dbReference>
<dbReference type="FunFam" id="3.40.718.10:FF:000011">
    <property type="entry name" value="Isocitrate dehydrogenase [NAD] subunit, mitochondrial"/>
    <property type="match status" value="1"/>
</dbReference>
<dbReference type="Gene3D" id="3.40.718.10">
    <property type="entry name" value="Isopropylmalate Dehydrogenase"/>
    <property type="match status" value="1"/>
</dbReference>
<dbReference type="InterPro" id="IPR019818">
    <property type="entry name" value="IsoCit/isopropylmalate_DH_CS"/>
</dbReference>
<dbReference type="InterPro" id="IPR004434">
    <property type="entry name" value="Isocitrate_DH_NAD"/>
</dbReference>
<dbReference type="InterPro" id="IPR024084">
    <property type="entry name" value="IsoPropMal-DH-like_dom"/>
</dbReference>
<dbReference type="NCBIfam" id="TIGR00175">
    <property type="entry name" value="mito_nad_idh"/>
    <property type="match status" value="1"/>
</dbReference>
<dbReference type="PANTHER" id="PTHR11835">
    <property type="entry name" value="DECARBOXYLATING DEHYDROGENASES-ISOCITRATE, ISOPROPYLMALATE, TARTRATE"/>
    <property type="match status" value="1"/>
</dbReference>
<dbReference type="PANTHER" id="PTHR11835:SF78">
    <property type="entry name" value="ISOCITRATE DEHYDROGENASE [NAD] SUBUNIT GAMMA, MITOCHONDRIAL"/>
    <property type="match status" value="1"/>
</dbReference>
<dbReference type="Pfam" id="PF00180">
    <property type="entry name" value="Iso_dh"/>
    <property type="match status" value="1"/>
</dbReference>
<dbReference type="SMART" id="SM01329">
    <property type="entry name" value="Iso_dh"/>
    <property type="match status" value="1"/>
</dbReference>
<dbReference type="SUPFAM" id="SSF53659">
    <property type="entry name" value="Isocitrate/Isopropylmalate dehydrogenase-like"/>
    <property type="match status" value="1"/>
</dbReference>
<dbReference type="PROSITE" id="PS00470">
    <property type="entry name" value="IDH_IMDH"/>
    <property type="match status" value="1"/>
</dbReference>